<organism>
    <name type="scientific">Buchnera aphidicola subsp. Acyrthosiphon pisum (strain APS)</name>
    <name type="common">Acyrthosiphon pisum symbiotic bacterium</name>
    <dbReference type="NCBI Taxonomy" id="107806"/>
    <lineage>
        <taxon>Bacteria</taxon>
        <taxon>Pseudomonadati</taxon>
        <taxon>Pseudomonadota</taxon>
        <taxon>Gammaproteobacteria</taxon>
        <taxon>Enterobacterales</taxon>
        <taxon>Erwiniaceae</taxon>
        <taxon>Buchnera</taxon>
    </lineage>
</organism>
<comment type="function">
    <text evidence="1">Specifically methylates the uridine in position 2552 of 23S rRNA at the 2'-O position of the ribose in the fully assembled 50S ribosomal subunit.</text>
</comment>
<comment type="catalytic activity">
    <reaction evidence="1">
        <text>uridine(2552) in 23S rRNA + S-adenosyl-L-methionine = 2'-O-methyluridine(2552) in 23S rRNA + S-adenosyl-L-homocysteine + H(+)</text>
        <dbReference type="Rhea" id="RHEA:42720"/>
        <dbReference type="Rhea" id="RHEA-COMP:10202"/>
        <dbReference type="Rhea" id="RHEA-COMP:10203"/>
        <dbReference type="ChEBI" id="CHEBI:15378"/>
        <dbReference type="ChEBI" id="CHEBI:57856"/>
        <dbReference type="ChEBI" id="CHEBI:59789"/>
        <dbReference type="ChEBI" id="CHEBI:65315"/>
        <dbReference type="ChEBI" id="CHEBI:74478"/>
        <dbReference type="EC" id="2.1.1.166"/>
    </reaction>
</comment>
<comment type="subcellular location">
    <subcellularLocation>
        <location evidence="1">Cytoplasm</location>
    </subcellularLocation>
</comment>
<comment type="similarity">
    <text evidence="1">Belongs to the class I-like SAM-binding methyltransferase superfamily. RNA methyltransferase RlmE family.</text>
</comment>
<sequence>MIVQKKKHRSNRWLLEHFQDQYVKAAKKNNIRSRAWFKLEQLDKNNKIFKIGMNVIDLGAAPGSWSQYASNRIGKKGRIIACDILPIRPITGVDIFQGDFRNKKTLNLMLNTFSNITFHLVMSDMAPNITGNFSIDMPRIIELCKLALKISEHVLSKNGIFLLKSFQGEGFNELYKEIKMLFKKIKICKPKTSRTRSREIFILATR</sequence>
<dbReference type="EC" id="2.1.1.166" evidence="1"/>
<dbReference type="EMBL" id="BA000003">
    <property type="protein sequence ID" value="BAB13086.1"/>
    <property type="molecule type" value="Genomic_DNA"/>
</dbReference>
<dbReference type="RefSeq" id="NP_240200.1">
    <property type="nucleotide sequence ID" value="NC_002528.1"/>
</dbReference>
<dbReference type="RefSeq" id="WP_010896093.1">
    <property type="nucleotide sequence ID" value="NC_002528.1"/>
</dbReference>
<dbReference type="SMR" id="P57463"/>
<dbReference type="EnsemblBacteria" id="BAB13086">
    <property type="protein sequence ID" value="BAB13086"/>
    <property type="gene ID" value="BAB13086"/>
</dbReference>
<dbReference type="KEGG" id="buc:BU383"/>
<dbReference type="PATRIC" id="fig|107806.10.peg.397"/>
<dbReference type="eggNOG" id="COG0293">
    <property type="taxonomic scope" value="Bacteria"/>
</dbReference>
<dbReference type="HOGENOM" id="CLU_009422_4_0_6"/>
<dbReference type="Proteomes" id="UP000001806">
    <property type="component" value="Chromosome"/>
</dbReference>
<dbReference type="GO" id="GO:0005737">
    <property type="term" value="C:cytoplasm"/>
    <property type="evidence" value="ECO:0007669"/>
    <property type="project" value="UniProtKB-SubCell"/>
</dbReference>
<dbReference type="GO" id="GO:0008650">
    <property type="term" value="F:rRNA (uridine-2'-O-)-methyltransferase activity"/>
    <property type="evidence" value="ECO:0007669"/>
    <property type="project" value="UniProtKB-UniRule"/>
</dbReference>
<dbReference type="CDD" id="cd02440">
    <property type="entry name" value="AdoMet_MTases"/>
    <property type="match status" value="1"/>
</dbReference>
<dbReference type="FunFam" id="3.40.50.150:FF:000005">
    <property type="entry name" value="Ribosomal RNA large subunit methyltransferase E"/>
    <property type="match status" value="1"/>
</dbReference>
<dbReference type="Gene3D" id="3.40.50.150">
    <property type="entry name" value="Vaccinia Virus protein VP39"/>
    <property type="match status" value="1"/>
</dbReference>
<dbReference type="HAMAP" id="MF_01547">
    <property type="entry name" value="RNA_methyltr_E"/>
    <property type="match status" value="1"/>
</dbReference>
<dbReference type="InterPro" id="IPR050082">
    <property type="entry name" value="RNA_methyltr_RlmE"/>
</dbReference>
<dbReference type="InterPro" id="IPR002877">
    <property type="entry name" value="RNA_MeTrfase_FtsJ_dom"/>
</dbReference>
<dbReference type="InterPro" id="IPR015507">
    <property type="entry name" value="rRNA-MeTfrase_E"/>
</dbReference>
<dbReference type="InterPro" id="IPR029063">
    <property type="entry name" value="SAM-dependent_MTases_sf"/>
</dbReference>
<dbReference type="NCBIfam" id="NF008390">
    <property type="entry name" value="PRK11188.1"/>
    <property type="match status" value="1"/>
</dbReference>
<dbReference type="PANTHER" id="PTHR10920">
    <property type="entry name" value="RIBOSOMAL RNA METHYLTRANSFERASE"/>
    <property type="match status" value="1"/>
</dbReference>
<dbReference type="PANTHER" id="PTHR10920:SF18">
    <property type="entry name" value="RRNA METHYLTRANSFERASE 2, MITOCHONDRIAL"/>
    <property type="match status" value="1"/>
</dbReference>
<dbReference type="Pfam" id="PF01728">
    <property type="entry name" value="FtsJ"/>
    <property type="match status" value="1"/>
</dbReference>
<dbReference type="PIRSF" id="PIRSF005461">
    <property type="entry name" value="23S_rRNA_mtase"/>
    <property type="match status" value="1"/>
</dbReference>
<dbReference type="SUPFAM" id="SSF53335">
    <property type="entry name" value="S-adenosyl-L-methionine-dependent methyltransferases"/>
    <property type="match status" value="1"/>
</dbReference>
<name>RLME_BUCAI</name>
<reference key="1">
    <citation type="journal article" date="2000" name="Nature">
        <title>Genome sequence of the endocellular bacterial symbiont of aphids Buchnera sp. APS.</title>
        <authorList>
            <person name="Shigenobu S."/>
            <person name="Watanabe H."/>
            <person name="Hattori M."/>
            <person name="Sakaki Y."/>
            <person name="Ishikawa H."/>
        </authorList>
    </citation>
    <scope>NUCLEOTIDE SEQUENCE [LARGE SCALE GENOMIC DNA]</scope>
    <source>
        <strain>APS</strain>
    </source>
</reference>
<protein>
    <recommendedName>
        <fullName evidence="1">Ribosomal RNA large subunit methyltransferase E</fullName>
        <ecNumber evidence="1">2.1.1.166</ecNumber>
    </recommendedName>
    <alternativeName>
        <fullName evidence="1">23S rRNA Um2552 methyltransferase</fullName>
    </alternativeName>
    <alternativeName>
        <fullName evidence="1">rRNA (uridine-2'-O-)-methyltransferase</fullName>
    </alternativeName>
</protein>
<accession>P57463</accession>
<evidence type="ECO:0000255" key="1">
    <source>
        <dbReference type="HAMAP-Rule" id="MF_01547"/>
    </source>
</evidence>
<feature type="chain" id="PRO_0000155481" description="Ribosomal RNA large subunit methyltransferase E">
    <location>
        <begin position="1"/>
        <end position="206"/>
    </location>
</feature>
<feature type="active site" description="Proton acceptor" evidence="1">
    <location>
        <position position="164"/>
    </location>
</feature>
<feature type="binding site" evidence="1">
    <location>
        <position position="63"/>
    </location>
    <ligand>
        <name>S-adenosyl-L-methionine</name>
        <dbReference type="ChEBI" id="CHEBI:59789"/>
    </ligand>
</feature>
<feature type="binding site" evidence="1">
    <location>
        <position position="65"/>
    </location>
    <ligand>
        <name>S-adenosyl-L-methionine</name>
        <dbReference type="ChEBI" id="CHEBI:59789"/>
    </ligand>
</feature>
<feature type="binding site" evidence="1">
    <location>
        <position position="83"/>
    </location>
    <ligand>
        <name>S-adenosyl-L-methionine</name>
        <dbReference type="ChEBI" id="CHEBI:59789"/>
    </ligand>
</feature>
<feature type="binding site" evidence="1">
    <location>
        <position position="99"/>
    </location>
    <ligand>
        <name>S-adenosyl-L-methionine</name>
        <dbReference type="ChEBI" id="CHEBI:59789"/>
    </ligand>
</feature>
<feature type="binding site" evidence="1">
    <location>
        <position position="124"/>
    </location>
    <ligand>
        <name>S-adenosyl-L-methionine</name>
        <dbReference type="ChEBI" id="CHEBI:59789"/>
    </ligand>
</feature>
<gene>
    <name evidence="1" type="primary">rlmE</name>
    <name evidence="1" type="synonym">ftsJ</name>
    <name evidence="1" type="synonym">rrmJ</name>
    <name type="ordered locus">BU383</name>
</gene>
<keyword id="KW-0963">Cytoplasm</keyword>
<keyword id="KW-0489">Methyltransferase</keyword>
<keyword id="KW-1185">Reference proteome</keyword>
<keyword id="KW-0698">rRNA processing</keyword>
<keyword id="KW-0949">S-adenosyl-L-methionine</keyword>
<keyword id="KW-0808">Transferase</keyword>
<proteinExistence type="inferred from homology"/>